<protein>
    <recommendedName>
        <fullName>Alpha-2-macroglobulin receptor-associated protein</fullName>
        <shortName>Alpha-2-MRAP</shortName>
    </recommendedName>
    <alternativeName>
        <fullName>Heparin-binding protein 44</fullName>
        <shortName>HBP-44</shortName>
    </alternativeName>
    <alternativeName>
        <fullName>Low density lipoprotein receptor-related protein-associated protein 1</fullName>
        <shortName>RAP</shortName>
    </alternativeName>
</protein>
<proteinExistence type="evidence at protein level"/>
<reference key="1">
    <citation type="journal article" date="1993" name="J. Biochem.">
        <title>Mouse heparin binding protein-44 (HBP-44) associates with brushin, a high-molecular-weight glycoprotein antigen common to the kidney and teratocarcinomas.</title>
        <authorList>
            <person name="Nakamoto M."/>
            <person name="Ozawa M."/>
            <person name="Jacinto S.D."/>
            <person name="Furukawa T."/>
            <person name="Natori Y."/>
            <person name="Shirahama H."/>
            <person name="Yonezawa S."/>
            <person name="Nakayama T."/>
            <person name="Muramatsu T."/>
        </authorList>
    </citation>
    <scope>NUCLEOTIDE SEQUENCE [MRNA]</scope>
    <scope>PARTIAL PROTEIN SEQUENCE</scope>
</reference>
<reference key="2">
    <citation type="journal article" date="1990" name="J. Biochem.">
        <title>A heparin binding protein whose expression increases during differentiation of embryonal carcinoma cells to parietal endoderm cells: cDNA cloning and sequence analysis.</title>
        <authorList>
            <person name="Furukawa T."/>
            <person name="Ozawa M."/>
            <person name="Huang R.P."/>
            <person name="Muramatsu T."/>
        </authorList>
    </citation>
    <scope>NUCLEOTIDE SEQUENCE [MRNA] OF 2-360</scope>
    <scope>TISSUE SPECIFICITY</scope>
</reference>
<reference key="3">
    <citation type="submission" date="2007-04" db="UniProtKB">
        <authorList>
            <person name="Lubec G."/>
            <person name="Kang S.U."/>
        </authorList>
    </citation>
    <scope>PROTEIN SEQUENCE OF 310-322</scope>
    <scope>IDENTIFICATION BY MASS SPECTROMETRY</scope>
    <source>
        <strain>C57BL/6J</strain>
        <tissue>Brain</tissue>
    </source>
</reference>
<reference key="4">
    <citation type="journal article" date="2010" name="Cell">
        <title>A tissue-specific atlas of mouse protein phosphorylation and expression.</title>
        <authorList>
            <person name="Huttlin E.L."/>
            <person name="Jedrychowski M.P."/>
            <person name="Elias J.E."/>
            <person name="Goswami T."/>
            <person name="Rad R."/>
            <person name="Beausoleil S.A."/>
            <person name="Villen J."/>
            <person name="Haas W."/>
            <person name="Sowa M.E."/>
            <person name="Gygi S.P."/>
        </authorList>
    </citation>
    <scope>PHOSPHORYLATION [LARGE SCALE ANALYSIS] AT SER-138</scope>
    <scope>IDENTIFICATION BY MASS SPECTROMETRY [LARGE SCALE ANALYSIS]</scope>
    <source>
        <tissue>Brain</tissue>
        <tissue>Brown adipose tissue</tissue>
        <tissue>Heart</tissue>
        <tissue>Kidney</tissue>
        <tissue>Liver</tissue>
        <tissue>Lung</tissue>
        <tissue>Pancreas</tissue>
        <tissue>Spleen</tissue>
        <tissue>Testis</tissue>
    </source>
</reference>
<keyword id="KW-0175">Coiled coil</keyword>
<keyword id="KW-0903">Direct protein sequencing</keyword>
<keyword id="KW-0256">Endoplasmic reticulum</keyword>
<keyword id="KW-0967">Endosome</keyword>
<keyword id="KW-0325">Glycoprotein</keyword>
<keyword id="KW-0333">Golgi apparatus</keyword>
<keyword id="KW-0358">Heparin-binding</keyword>
<keyword id="KW-0597">Phosphoprotein</keyword>
<keyword id="KW-1185">Reference proteome</keyword>
<keyword id="KW-0732">Signal</keyword>
<comment type="function">
    <text evidence="1">Molecular chaperone for LDL receptor-related proteins that may regulate their ligand binding activity along the secretory pathway.</text>
</comment>
<comment type="subunit">
    <text evidence="1">Interacts with the LRP1/alpha-2-macroglobulin receptor heavy and light chains; the interaction is transient and coincides with a reduction of ligand binding by the receptor. Interacts with LRP2/glycoprotein 330. Interacts with LRP1B; binding is followed by internalization and degradation. Interacts with LDLR. Interacts with SORL1 (By similarity). Interacts with LRP1; this interaction is followed by rapid internalization (By similarity).</text>
</comment>
<comment type="subcellular location">
    <subcellularLocation>
        <location evidence="1">Rough endoplasmic reticulum lumen</location>
    </subcellularLocation>
    <subcellularLocation>
        <location evidence="1">Endoplasmic reticulum-Golgi intermediate compartment lumen</location>
    </subcellularLocation>
    <subcellularLocation>
        <location evidence="1">Golgi apparatus</location>
        <location evidence="1">cis-Golgi network</location>
    </subcellularLocation>
    <subcellularLocation>
        <location evidence="1">Golgi apparatus lumen</location>
    </subcellularLocation>
    <subcellularLocation>
        <location evidence="1">Endosome lumen</location>
    </subcellularLocation>
    <subcellularLocation>
        <location evidence="1">Cell surface</location>
    </subcellularLocation>
    <text evidence="1">May be associated with receptors at the cell surface.</text>
</comment>
<comment type="tissue specificity">
    <text evidence="4">Highly expressed in PYS-2 parietal endoderm cells and in the kidney. The RNA level increased about 10-fold during differentiation of F9 embryonal carcinoma cells to parietal endoderm cells.</text>
</comment>
<comment type="PTM">
    <text evidence="1">N-glycosylated.</text>
</comment>
<comment type="similarity">
    <text evidence="5">Belongs to the alpha-2-MRAP family.</text>
</comment>
<organism>
    <name type="scientific">Mus musculus</name>
    <name type="common">Mouse</name>
    <dbReference type="NCBI Taxonomy" id="10090"/>
    <lineage>
        <taxon>Eukaryota</taxon>
        <taxon>Metazoa</taxon>
        <taxon>Chordata</taxon>
        <taxon>Craniata</taxon>
        <taxon>Vertebrata</taxon>
        <taxon>Euteleostomi</taxon>
        <taxon>Mammalia</taxon>
        <taxon>Eutheria</taxon>
        <taxon>Euarchontoglires</taxon>
        <taxon>Glires</taxon>
        <taxon>Rodentia</taxon>
        <taxon>Myomorpha</taxon>
        <taxon>Muroidea</taxon>
        <taxon>Muridae</taxon>
        <taxon>Murinae</taxon>
        <taxon>Mus</taxon>
        <taxon>Mus</taxon>
    </lineage>
</organism>
<evidence type="ECO:0000250" key="1">
    <source>
        <dbReference type="UniProtKB" id="P30533"/>
    </source>
</evidence>
<evidence type="ECO:0000250" key="2">
    <source>
        <dbReference type="UniProtKB" id="Q99068"/>
    </source>
</evidence>
<evidence type="ECO:0000255" key="3"/>
<evidence type="ECO:0000269" key="4">
    <source>
    </source>
</evidence>
<evidence type="ECO:0000305" key="5"/>
<evidence type="ECO:0007744" key="6">
    <source>
    </source>
</evidence>
<name>AMRP_MOUSE</name>
<feature type="signal peptide" evidence="3">
    <location>
        <begin position="1"/>
        <end position="28"/>
    </location>
</feature>
<feature type="chain" id="PRO_0000020725" description="Alpha-2-macroglobulin receptor-associated protein">
    <location>
        <begin position="29"/>
        <end position="360"/>
    </location>
</feature>
<feature type="region of interest" description="LDL receptor binding" evidence="3">
    <location>
        <begin position="240"/>
        <end position="356"/>
    </location>
</feature>
<feature type="coiled-coil region" evidence="3">
    <location>
        <begin position="184"/>
        <end position="302"/>
    </location>
</feature>
<feature type="short sequence motif" description="Prevents secretion from ER" evidence="1">
    <location>
        <begin position="357"/>
        <end position="360"/>
    </location>
</feature>
<feature type="modified residue" description="Phosphoserine" evidence="2">
    <location>
        <position position="53"/>
    </location>
</feature>
<feature type="modified residue" description="Phosphoserine" evidence="6">
    <location>
        <position position="138"/>
    </location>
</feature>
<feature type="glycosylation site" description="N-linked (GlcNAc...) asparagine" evidence="3">
    <location>
        <position position="271"/>
    </location>
</feature>
<accession>P55302</accession>
<sequence>MAPRRERVSTLPRLQLLVLLLLPLMLVPQPIAGHGGKYSREKNEPEMAAKRESGEEFRMEKLNQLWEKAKRLHLSPVRLAELHSDLKIQERDELNWKKLKVEGLDKDGEKEAKLIHNLNVILARYGLDGRKDAQMVHSNALNEDTQDELGDPRLEKLWHKAKTSGKFSSEELDKLWREFLHYKEKIQEYNVLLDTLSRAEEGYENLLSPSDMAHIKSDTLISKHSELKDRLRSINQGLDRLRKVSHQGYGSTTEFEEPRVIDLWDLAQSANFTEKELESFREELKHFEAKIEKHNHYQKQLEISHQKLKHVESIGDPEHISRNKEKYVLLEEKTKELGYKVKKHLQDLSSRVSRARHNEL</sequence>
<gene>
    <name type="primary">Lrpap1</name>
</gene>
<dbReference type="EMBL" id="S67967">
    <property type="protein sequence ID" value="AAC60668.1"/>
    <property type="molecule type" value="mRNA"/>
</dbReference>
<dbReference type="EMBL" id="D00622">
    <property type="protein sequence ID" value="BAA00500.1"/>
    <property type="molecule type" value="mRNA"/>
</dbReference>
<dbReference type="CCDS" id="CCDS19225.1"/>
<dbReference type="PIR" id="JX0281">
    <property type="entry name" value="JX0281"/>
</dbReference>
<dbReference type="RefSeq" id="NP_038615.2">
    <property type="nucleotide sequence ID" value="NM_013587.3"/>
</dbReference>
<dbReference type="SMR" id="P55302"/>
<dbReference type="BioGRID" id="201205">
    <property type="interactions" value="10"/>
</dbReference>
<dbReference type="FunCoup" id="P55302">
    <property type="interactions" value="1404"/>
</dbReference>
<dbReference type="IntAct" id="P55302">
    <property type="interactions" value="1"/>
</dbReference>
<dbReference type="STRING" id="10090.ENSMUSP00000030986"/>
<dbReference type="GlyConnect" id="2121">
    <property type="glycosylation" value="1 N-Linked glycan (1 site)"/>
</dbReference>
<dbReference type="GlyCosmos" id="P55302">
    <property type="glycosylation" value="1 site, 1 glycan"/>
</dbReference>
<dbReference type="GlyGen" id="P55302">
    <property type="glycosylation" value="2 sites, 2 N-linked glycans (1 site), 1 O-linked glycan (1 site)"/>
</dbReference>
<dbReference type="iPTMnet" id="P55302"/>
<dbReference type="PhosphoSitePlus" id="P55302"/>
<dbReference type="REPRODUCTION-2DPAGE" id="IPI00469307"/>
<dbReference type="REPRODUCTION-2DPAGE" id="P55302"/>
<dbReference type="CPTAC" id="non-CPTAC-3763"/>
<dbReference type="jPOST" id="P55302"/>
<dbReference type="PaxDb" id="10090-ENSMUSP00000030986"/>
<dbReference type="PeptideAtlas" id="P55302"/>
<dbReference type="ProteomicsDB" id="281976"/>
<dbReference type="Pumba" id="P55302"/>
<dbReference type="Antibodypedia" id="1334">
    <property type="antibodies" value="488 antibodies from 32 providers"/>
</dbReference>
<dbReference type="DNASU" id="16976"/>
<dbReference type="Ensembl" id="ENSMUST00000030986.15">
    <property type="protein sequence ID" value="ENSMUSP00000030986.9"/>
    <property type="gene ID" value="ENSMUSG00000029103.17"/>
</dbReference>
<dbReference type="GeneID" id="16976"/>
<dbReference type="KEGG" id="mmu:16976"/>
<dbReference type="UCSC" id="uc008xdo.1">
    <property type="organism name" value="mouse"/>
</dbReference>
<dbReference type="AGR" id="MGI:96829"/>
<dbReference type="CTD" id="4043"/>
<dbReference type="MGI" id="MGI:96829">
    <property type="gene designation" value="Lrpap1"/>
</dbReference>
<dbReference type="VEuPathDB" id="HostDB:ENSMUSG00000029103"/>
<dbReference type="eggNOG" id="KOG3956">
    <property type="taxonomic scope" value="Eukaryota"/>
</dbReference>
<dbReference type="GeneTree" id="ENSGT00390000004855"/>
<dbReference type="HOGENOM" id="CLU_064512_0_0_1"/>
<dbReference type="InParanoid" id="P55302"/>
<dbReference type="OMA" id="QEFEHHQ"/>
<dbReference type="OrthoDB" id="5817428at2759"/>
<dbReference type="PhylomeDB" id="P55302"/>
<dbReference type="TreeFam" id="TF320678"/>
<dbReference type="BioGRID-ORCS" id="16976">
    <property type="hits" value="1 hit in 79 CRISPR screens"/>
</dbReference>
<dbReference type="PRO" id="PR:P55302"/>
<dbReference type="Proteomes" id="UP000000589">
    <property type="component" value="Chromosome 5"/>
</dbReference>
<dbReference type="RNAct" id="P55302">
    <property type="molecule type" value="protein"/>
</dbReference>
<dbReference type="Bgee" id="ENSMUSG00000029103">
    <property type="expression patterns" value="Expressed in vestibular membrane of cochlear duct and 277 other cell types or tissues"/>
</dbReference>
<dbReference type="ExpressionAtlas" id="P55302">
    <property type="expression patterns" value="baseline and differential"/>
</dbReference>
<dbReference type="GO" id="GO:0009986">
    <property type="term" value="C:cell surface"/>
    <property type="evidence" value="ECO:0007669"/>
    <property type="project" value="UniProtKB-SubCell"/>
</dbReference>
<dbReference type="GO" id="GO:0005801">
    <property type="term" value="C:cis-Golgi network"/>
    <property type="evidence" value="ECO:0000250"/>
    <property type="project" value="UniProtKB"/>
</dbReference>
<dbReference type="GO" id="GO:0005793">
    <property type="term" value="C:endoplasmic reticulum-Golgi intermediate compartment"/>
    <property type="evidence" value="ECO:0000250"/>
    <property type="project" value="UniProtKB"/>
</dbReference>
<dbReference type="GO" id="GO:0005768">
    <property type="term" value="C:endosome"/>
    <property type="evidence" value="ECO:0000250"/>
    <property type="project" value="UniProtKB"/>
</dbReference>
<dbReference type="GO" id="GO:0031904">
    <property type="term" value="C:endosome lumen"/>
    <property type="evidence" value="ECO:0007669"/>
    <property type="project" value="UniProtKB-SubCell"/>
</dbReference>
<dbReference type="GO" id="GO:0005794">
    <property type="term" value="C:Golgi apparatus"/>
    <property type="evidence" value="ECO:0000250"/>
    <property type="project" value="UniProtKB"/>
</dbReference>
<dbReference type="GO" id="GO:0005796">
    <property type="term" value="C:Golgi lumen"/>
    <property type="evidence" value="ECO:0007669"/>
    <property type="project" value="UniProtKB-SubCell"/>
</dbReference>
<dbReference type="GO" id="GO:0005886">
    <property type="term" value="C:plasma membrane"/>
    <property type="evidence" value="ECO:0000266"/>
    <property type="project" value="MGI"/>
</dbReference>
<dbReference type="GO" id="GO:0048237">
    <property type="term" value="C:rough endoplasmic reticulum lumen"/>
    <property type="evidence" value="ECO:0000250"/>
    <property type="project" value="UniProtKB"/>
</dbReference>
<dbReference type="GO" id="GO:0008201">
    <property type="term" value="F:heparin binding"/>
    <property type="evidence" value="ECO:0007669"/>
    <property type="project" value="UniProtKB-KW"/>
</dbReference>
<dbReference type="GO" id="GO:0035473">
    <property type="term" value="F:lipase binding"/>
    <property type="evidence" value="ECO:0007669"/>
    <property type="project" value="Ensembl"/>
</dbReference>
<dbReference type="GO" id="GO:0050750">
    <property type="term" value="F:low-density lipoprotein particle receptor binding"/>
    <property type="evidence" value="ECO:0000353"/>
    <property type="project" value="MGI"/>
</dbReference>
<dbReference type="GO" id="GO:0048019">
    <property type="term" value="F:receptor antagonist activity"/>
    <property type="evidence" value="ECO:0007669"/>
    <property type="project" value="Ensembl"/>
</dbReference>
<dbReference type="GO" id="GO:0048018">
    <property type="term" value="F:receptor ligand activity"/>
    <property type="evidence" value="ECO:0007669"/>
    <property type="project" value="Ensembl"/>
</dbReference>
<dbReference type="GO" id="GO:0070326">
    <property type="term" value="F:very-low-density lipoprotein particle receptor binding"/>
    <property type="evidence" value="ECO:0007669"/>
    <property type="project" value="Ensembl"/>
</dbReference>
<dbReference type="GO" id="GO:0150093">
    <property type="term" value="P:amyloid-beta clearance by transcytosis"/>
    <property type="evidence" value="ECO:0007669"/>
    <property type="project" value="Ensembl"/>
</dbReference>
<dbReference type="GO" id="GO:1900222">
    <property type="term" value="P:negative regulation of amyloid-beta clearance"/>
    <property type="evidence" value="ECO:0007669"/>
    <property type="project" value="Ensembl"/>
</dbReference>
<dbReference type="GO" id="GO:0002091">
    <property type="term" value="P:negative regulation of receptor internalization"/>
    <property type="evidence" value="ECO:0007669"/>
    <property type="project" value="Ensembl"/>
</dbReference>
<dbReference type="GO" id="GO:0010916">
    <property type="term" value="P:negative regulation of very-low-density lipoprotein particle clearance"/>
    <property type="evidence" value="ECO:0007669"/>
    <property type="project" value="Ensembl"/>
</dbReference>
<dbReference type="GO" id="GO:0048259">
    <property type="term" value="P:regulation of receptor-mediated endocytosis"/>
    <property type="evidence" value="ECO:0000250"/>
    <property type="project" value="UniProtKB"/>
</dbReference>
<dbReference type="CDD" id="cd14806">
    <property type="entry name" value="RAP_D1"/>
    <property type="match status" value="1"/>
</dbReference>
<dbReference type="CDD" id="cd14807">
    <property type="entry name" value="RAP_D2"/>
    <property type="match status" value="1"/>
</dbReference>
<dbReference type="CDD" id="cd14808">
    <property type="entry name" value="RAP_D3"/>
    <property type="match status" value="1"/>
</dbReference>
<dbReference type="FunFam" id="1.20.81.10:FF:000001">
    <property type="entry name" value="Alpha-2-macroglobulin receptor-associated protein"/>
    <property type="match status" value="1"/>
</dbReference>
<dbReference type="Gene3D" id="1.20.81.10">
    <property type="entry name" value="RAP domain"/>
    <property type="match status" value="3"/>
</dbReference>
<dbReference type="InterPro" id="IPR038003">
    <property type="entry name" value="A2-macroglobuin_RAP"/>
</dbReference>
<dbReference type="InterPro" id="IPR010483">
    <property type="entry name" value="Alpha_2_MRAP_C"/>
</dbReference>
<dbReference type="InterPro" id="IPR009066">
    <property type="entry name" value="MG_RAP_rcpt_1"/>
</dbReference>
<dbReference type="InterPro" id="IPR038001">
    <property type="entry name" value="RAP_D2"/>
</dbReference>
<dbReference type="InterPro" id="IPR037999">
    <property type="entry name" value="RAP_D3"/>
</dbReference>
<dbReference type="InterPro" id="IPR036744">
    <property type="entry name" value="RAP_sf"/>
</dbReference>
<dbReference type="PANTHER" id="PTHR16560">
    <property type="entry name" value="ALPHA-2-MACROGLOBULIN RECEPTOR-ASSOCIATED PROTEIN"/>
    <property type="match status" value="1"/>
</dbReference>
<dbReference type="PANTHER" id="PTHR16560:SF2">
    <property type="entry name" value="ALPHA-2-MACROGLOBULIN RECEPTOR-ASSOCIATED PROTEIN"/>
    <property type="match status" value="1"/>
</dbReference>
<dbReference type="Pfam" id="PF06401">
    <property type="entry name" value="Alpha-2-MRAP_C"/>
    <property type="match status" value="1"/>
</dbReference>
<dbReference type="Pfam" id="PF06400">
    <property type="entry name" value="Alpha-2-MRAP_N"/>
    <property type="match status" value="1"/>
</dbReference>
<dbReference type="SUPFAM" id="SSF47045">
    <property type="entry name" value="RAP domain-like"/>
    <property type="match status" value="3"/>
</dbReference>
<dbReference type="PROSITE" id="PS00014">
    <property type="entry name" value="ER_TARGET"/>
    <property type="match status" value="1"/>
</dbReference>